<dbReference type="EMBL" id="CP001217">
    <property type="protein sequence ID" value="ACJ07553.1"/>
    <property type="molecule type" value="Genomic_DNA"/>
</dbReference>
<dbReference type="SMR" id="B6JKX5"/>
<dbReference type="KEGG" id="hpp:HPP12_0396"/>
<dbReference type="HOGENOM" id="CLU_006301_4_0_7"/>
<dbReference type="Proteomes" id="UP000008198">
    <property type="component" value="Chromosome"/>
</dbReference>
<dbReference type="GO" id="GO:0005829">
    <property type="term" value="C:cytosol"/>
    <property type="evidence" value="ECO:0007669"/>
    <property type="project" value="TreeGrafter"/>
</dbReference>
<dbReference type="GO" id="GO:0005525">
    <property type="term" value="F:GTP binding"/>
    <property type="evidence" value="ECO:0007669"/>
    <property type="project" value="UniProtKB-KW"/>
</dbReference>
<dbReference type="GO" id="GO:0003924">
    <property type="term" value="F:GTPase activity"/>
    <property type="evidence" value="ECO:0007669"/>
    <property type="project" value="UniProtKB-UniRule"/>
</dbReference>
<dbReference type="GO" id="GO:0003743">
    <property type="term" value="F:translation initiation factor activity"/>
    <property type="evidence" value="ECO:0007669"/>
    <property type="project" value="UniProtKB-UniRule"/>
</dbReference>
<dbReference type="CDD" id="cd01887">
    <property type="entry name" value="IF2_eIF5B"/>
    <property type="match status" value="1"/>
</dbReference>
<dbReference type="CDD" id="cd03702">
    <property type="entry name" value="IF2_mtIF2_II"/>
    <property type="match status" value="1"/>
</dbReference>
<dbReference type="CDD" id="cd03692">
    <property type="entry name" value="mtIF2_IVc"/>
    <property type="match status" value="1"/>
</dbReference>
<dbReference type="FunFam" id="2.40.30.10:FF:000008">
    <property type="entry name" value="Translation initiation factor IF-2"/>
    <property type="match status" value="1"/>
</dbReference>
<dbReference type="FunFam" id="2.40.30.10:FF:000054">
    <property type="entry name" value="Translation initiation factor IF-2"/>
    <property type="match status" value="1"/>
</dbReference>
<dbReference type="FunFam" id="3.40.50.10050:FF:000001">
    <property type="entry name" value="Translation initiation factor IF-2"/>
    <property type="match status" value="1"/>
</dbReference>
<dbReference type="FunFam" id="3.40.50.300:FF:000019">
    <property type="entry name" value="Translation initiation factor IF-2"/>
    <property type="match status" value="1"/>
</dbReference>
<dbReference type="Gene3D" id="3.40.50.300">
    <property type="entry name" value="P-loop containing nucleotide triphosphate hydrolases"/>
    <property type="match status" value="1"/>
</dbReference>
<dbReference type="Gene3D" id="2.40.30.10">
    <property type="entry name" value="Translation factors"/>
    <property type="match status" value="2"/>
</dbReference>
<dbReference type="Gene3D" id="3.40.50.10050">
    <property type="entry name" value="Translation initiation factor IF- 2, domain 3"/>
    <property type="match status" value="1"/>
</dbReference>
<dbReference type="HAMAP" id="MF_00100_B">
    <property type="entry name" value="IF_2_B"/>
    <property type="match status" value="1"/>
</dbReference>
<dbReference type="InterPro" id="IPR053905">
    <property type="entry name" value="EF-G-like_DII"/>
</dbReference>
<dbReference type="InterPro" id="IPR044145">
    <property type="entry name" value="IF2_II"/>
</dbReference>
<dbReference type="InterPro" id="IPR006847">
    <property type="entry name" value="IF2_N"/>
</dbReference>
<dbReference type="InterPro" id="IPR027417">
    <property type="entry name" value="P-loop_NTPase"/>
</dbReference>
<dbReference type="InterPro" id="IPR005225">
    <property type="entry name" value="Small_GTP-bd"/>
</dbReference>
<dbReference type="InterPro" id="IPR000795">
    <property type="entry name" value="T_Tr_GTP-bd_dom"/>
</dbReference>
<dbReference type="InterPro" id="IPR000178">
    <property type="entry name" value="TF_IF2_bacterial-like"/>
</dbReference>
<dbReference type="InterPro" id="IPR015760">
    <property type="entry name" value="TIF_IF2"/>
</dbReference>
<dbReference type="InterPro" id="IPR023115">
    <property type="entry name" value="TIF_IF2_dom3"/>
</dbReference>
<dbReference type="InterPro" id="IPR036925">
    <property type="entry name" value="TIF_IF2_dom3_sf"/>
</dbReference>
<dbReference type="InterPro" id="IPR009000">
    <property type="entry name" value="Transl_B-barrel_sf"/>
</dbReference>
<dbReference type="NCBIfam" id="TIGR00487">
    <property type="entry name" value="IF-2"/>
    <property type="match status" value="1"/>
</dbReference>
<dbReference type="NCBIfam" id="TIGR00231">
    <property type="entry name" value="small_GTP"/>
    <property type="match status" value="1"/>
</dbReference>
<dbReference type="PANTHER" id="PTHR43381:SF5">
    <property type="entry name" value="TR-TYPE G DOMAIN-CONTAINING PROTEIN"/>
    <property type="match status" value="1"/>
</dbReference>
<dbReference type="PANTHER" id="PTHR43381">
    <property type="entry name" value="TRANSLATION INITIATION FACTOR IF-2-RELATED"/>
    <property type="match status" value="1"/>
</dbReference>
<dbReference type="Pfam" id="PF22042">
    <property type="entry name" value="EF-G_D2"/>
    <property type="match status" value="1"/>
</dbReference>
<dbReference type="Pfam" id="PF00009">
    <property type="entry name" value="GTP_EFTU"/>
    <property type="match status" value="1"/>
</dbReference>
<dbReference type="Pfam" id="PF11987">
    <property type="entry name" value="IF-2"/>
    <property type="match status" value="1"/>
</dbReference>
<dbReference type="Pfam" id="PF04760">
    <property type="entry name" value="IF2_N"/>
    <property type="match status" value="1"/>
</dbReference>
<dbReference type="SUPFAM" id="SSF52156">
    <property type="entry name" value="Initiation factor IF2/eIF5b, domain 3"/>
    <property type="match status" value="1"/>
</dbReference>
<dbReference type="SUPFAM" id="SSF52540">
    <property type="entry name" value="P-loop containing nucleoside triphosphate hydrolases"/>
    <property type="match status" value="1"/>
</dbReference>
<dbReference type="SUPFAM" id="SSF50447">
    <property type="entry name" value="Translation proteins"/>
    <property type="match status" value="2"/>
</dbReference>
<dbReference type="PROSITE" id="PS51722">
    <property type="entry name" value="G_TR_2"/>
    <property type="match status" value="1"/>
</dbReference>
<dbReference type="PROSITE" id="PS01176">
    <property type="entry name" value="IF2"/>
    <property type="match status" value="1"/>
</dbReference>
<sequence length="947" mass="105682">MSEMVDLKEFLAELGKTQKELKNVIEQAKDIGLELKTNSKMTPEQAGKLYKYIVDGIKEQIQANQPAKNPEQDNKDDLNTAVASKSLNKKVFKTPKKEETKSQPKPKKTKEKKKEAPTPIAKKKGGIEIVNTFEDQTPPVENAPKVVSHSQIEKAKQKLQEIQKSREALNKLTQSNANNANSTNNANNAKKEISEVKKQEQEIKRHENIKRRTGFRVIKRNDETENETENSVTESKKPTQSAAAIFEDIKKEWQEKDKQEAKKVKKPSKPKATPTAKNNKSHKIDFSDARDFKGNDIYDDETDEILLFDLHEQDNLNKEEEEKEIRQNINDRVRVQRKNPWMNESGIKRQSKKKRAFRNDNSQKVIQSAIAIPEEVRVYEFAQKANLNLADVIKTLFNLGLMVTKNDFLDKDSIEILAEEFHLEISVQNTLEEFEVEEVLEGVKKERPPVVTIMGHVDHGKTSLLDKIRDKRVAHTEAGGITQHIGAYMVEKNNKWVSFIDTPGHEAFSQMRNRGAQVTDIAVIVIAADDGVKQQTIEALEHAKAANVPVIFAMNKMDKPNVNPDKLKAECAELGYNPVDWGGEHEFIPVSAKTGDGIDNLLETILIQADIMELKAIEEGSARAVVLEGSVEKGRGAVATVIVQSGTLSVGDSFFAETAFGKVRTMTDDQGKSIQNLKPSMVALITGLSEVPPAGSVLIGVENDSIARLQAQKRATYLHQKALSKSTKVSFDELSEMVANKELKNIPVVIKADTQGSLEAIKNSLLELNNEEVAIQVIHSGVGGITENDLSLVSNSEHAVILGFNIRPTGNVKNKAKEYNVSIKTYTVIYALIEEMRSLLLGLMSPIIEEEHTGQAEVRETFNIPKVGTIAGCVVSDGVIARGIKARLIRDGVVIHTGEILSLKRFKDDVKEVSKGYECGIMLDNYNEIKVGDVFETYKEIHKKRTL</sequence>
<comment type="function">
    <text evidence="2">One of the essential components for the initiation of protein synthesis. Protects formylmethionyl-tRNA from spontaneous hydrolysis and promotes its binding to the 30S ribosomal subunits. Also involved in the hydrolysis of GTP during the formation of the 70S ribosomal complex.</text>
</comment>
<comment type="subcellular location">
    <subcellularLocation>
        <location evidence="2">Cytoplasm</location>
    </subcellularLocation>
</comment>
<comment type="similarity">
    <text evidence="2">Belongs to the TRAFAC class translation factor GTPase superfamily. Classic translation factor GTPase family. IF-2 subfamily.</text>
</comment>
<protein>
    <recommendedName>
        <fullName evidence="2">Translation initiation factor IF-2</fullName>
    </recommendedName>
</protein>
<gene>
    <name evidence="2" type="primary">infB</name>
    <name type="ordered locus">HPP12_0396</name>
</gene>
<keyword id="KW-0963">Cytoplasm</keyword>
<keyword id="KW-0342">GTP-binding</keyword>
<keyword id="KW-0396">Initiation factor</keyword>
<keyword id="KW-0547">Nucleotide-binding</keyword>
<keyword id="KW-0648">Protein biosynthesis</keyword>
<proteinExistence type="inferred from homology"/>
<reference key="1">
    <citation type="submission" date="2008-10" db="EMBL/GenBank/DDBJ databases">
        <title>The complete genome sequence of Helicobacter pylori strain P12.</title>
        <authorList>
            <person name="Fischer W."/>
            <person name="Windhager L."/>
            <person name="Karnholz A."/>
            <person name="Zeiller M."/>
            <person name="Zimmer R."/>
            <person name="Haas R."/>
        </authorList>
    </citation>
    <scope>NUCLEOTIDE SEQUENCE [LARGE SCALE GENOMIC DNA]</scope>
    <source>
        <strain>P12</strain>
    </source>
</reference>
<feature type="chain" id="PRO_1000093791" description="Translation initiation factor IF-2">
    <location>
        <begin position="1"/>
        <end position="947"/>
    </location>
</feature>
<feature type="domain" description="tr-type G">
    <location>
        <begin position="446"/>
        <end position="615"/>
    </location>
</feature>
<feature type="region of interest" description="Disordered" evidence="3">
    <location>
        <begin position="61"/>
        <end position="284"/>
    </location>
</feature>
<feature type="region of interest" description="G1" evidence="1">
    <location>
        <begin position="455"/>
        <end position="462"/>
    </location>
</feature>
<feature type="region of interest" description="G2" evidence="1">
    <location>
        <begin position="480"/>
        <end position="484"/>
    </location>
</feature>
<feature type="region of interest" description="G3" evidence="1">
    <location>
        <begin position="501"/>
        <end position="504"/>
    </location>
</feature>
<feature type="region of interest" description="G4" evidence="1">
    <location>
        <begin position="555"/>
        <end position="558"/>
    </location>
</feature>
<feature type="region of interest" description="G5" evidence="1">
    <location>
        <begin position="591"/>
        <end position="593"/>
    </location>
</feature>
<feature type="compositionally biased region" description="Basic and acidic residues" evidence="3">
    <location>
        <begin position="151"/>
        <end position="169"/>
    </location>
</feature>
<feature type="compositionally biased region" description="Low complexity" evidence="3">
    <location>
        <begin position="175"/>
        <end position="188"/>
    </location>
</feature>
<feature type="compositionally biased region" description="Basic and acidic residues" evidence="3">
    <location>
        <begin position="189"/>
        <end position="206"/>
    </location>
</feature>
<feature type="compositionally biased region" description="Basic residues" evidence="3">
    <location>
        <begin position="207"/>
        <end position="218"/>
    </location>
</feature>
<feature type="compositionally biased region" description="Basic and acidic residues" evidence="3">
    <location>
        <begin position="247"/>
        <end position="262"/>
    </location>
</feature>
<feature type="binding site" evidence="2">
    <location>
        <begin position="455"/>
        <end position="462"/>
    </location>
    <ligand>
        <name>GTP</name>
        <dbReference type="ChEBI" id="CHEBI:37565"/>
    </ligand>
</feature>
<feature type="binding site" evidence="2">
    <location>
        <begin position="501"/>
        <end position="505"/>
    </location>
    <ligand>
        <name>GTP</name>
        <dbReference type="ChEBI" id="CHEBI:37565"/>
    </ligand>
</feature>
<feature type="binding site" evidence="2">
    <location>
        <begin position="555"/>
        <end position="558"/>
    </location>
    <ligand>
        <name>GTP</name>
        <dbReference type="ChEBI" id="CHEBI:37565"/>
    </ligand>
</feature>
<organism>
    <name type="scientific">Helicobacter pylori (strain P12)</name>
    <dbReference type="NCBI Taxonomy" id="570508"/>
    <lineage>
        <taxon>Bacteria</taxon>
        <taxon>Pseudomonadati</taxon>
        <taxon>Campylobacterota</taxon>
        <taxon>Epsilonproteobacteria</taxon>
        <taxon>Campylobacterales</taxon>
        <taxon>Helicobacteraceae</taxon>
        <taxon>Helicobacter</taxon>
    </lineage>
</organism>
<name>IF2_HELP2</name>
<accession>B6JKX5</accession>
<evidence type="ECO:0000250" key="1"/>
<evidence type="ECO:0000255" key="2">
    <source>
        <dbReference type="HAMAP-Rule" id="MF_00100"/>
    </source>
</evidence>
<evidence type="ECO:0000256" key="3">
    <source>
        <dbReference type="SAM" id="MobiDB-lite"/>
    </source>
</evidence>